<organism>
    <name type="scientific">Solanum bulbocastanum</name>
    <name type="common">Wild potato</name>
    <dbReference type="NCBI Taxonomy" id="147425"/>
    <lineage>
        <taxon>Eukaryota</taxon>
        <taxon>Viridiplantae</taxon>
        <taxon>Streptophyta</taxon>
        <taxon>Embryophyta</taxon>
        <taxon>Tracheophyta</taxon>
        <taxon>Spermatophyta</taxon>
        <taxon>Magnoliopsida</taxon>
        <taxon>eudicotyledons</taxon>
        <taxon>Gunneridae</taxon>
        <taxon>Pentapetalae</taxon>
        <taxon>asterids</taxon>
        <taxon>lamiids</taxon>
        <taxon>Solanales</taxon>
        <taxon>Solanaceae</taxon>
        <taxon>Solanoideae</taxon>
        <taxon>Solaneae</taxon>
        <taxon>Solanum</taxon>
    </lineage>
</organism>
<gene>
    <name evidence="1" type="primary">psaB</name>
</gene>
<comment type="function">
    <text evidence="1">PsaA and PsaB bind P700, the primary electron donor of photosystem I (PSI), as well as the electron acceptors A0, A1 and FX. PSI is a plastocyanin-ferredoxin oxidoreductase, converting photonic excitation into a charge separation, which transfers an electron from the donor P700 chlorophyll pair to the spectroscopically characterized acceptors A0, A1, FX, FA and FB in turn. Oxidized P700 is reduced on the lumenal side of the thylakoid membrane by plastocyanin.</text>
</comment>
<comment type="catalytic activity">
    <reaction evidence="1">
        <text>reduced [plastocyanin] + hnu + oxidized [2Fe-2S]-[ferredoxin] = oxidized [plastocyanin] + reduced [2Fe-2S]-[ferredoxin]</text>
        <dbReference type="Rhea" id="RHEA:30407"/>
        <dbReference type="Rhea" id="RHEA-COMP:10000"/>
        <dbReference type="Rhea" id="RHEA-COMP:10001"/>
        <dbReference type="Rhea" id="RHEA-COMP:10039"/>
        <dbReference type="Rhea" id="RHEA-COMP:10040"/>
        <dbReference type="ChEBI" id="CHEBI:29036"/>
        <dbReference type="ChEBI" id="CHEBI:30212"/>
        <dbReference type="ChEBI" id="CHEBI:33737"/>
        <dbReference type="ChEBI" id="CHEBI:33738"/>
        <dbReference type="ChEBI" id="CHEBI:49552"/>
        <dbReference type="EC" id="1.97.1.12"/>
    </reaction>
</comment>
<comment type="cofactor">
    <text evidence="1">P700 is a chlorophyll a/chlorophyll a' dimer, A0 is one or more chlorophyll a, A1 is one or both phylloquinones and FX is a shared 4Fe-4S iron-sulfur center.</text>
</comment>
<comment type="subunit">
    <text evidence="1">The PsaA/B heterodimer binds the P700 chlorophyll special pair and subsequent electron acceptors. PSI consists of a core antenna complex that captures photons, and an electron transfer chain that converts photonic excitation into a charge separation. The eukaryotic PSI reaction center is composed of at least 11 subunits.</text>
</comment>
<comment type="subcellular location">
    <subcellularLocation>
        <location>Plastid</location>
        <location>Chloroplast thylakoid membrane</location>
        <topology>Multi-pass membrane protein</topology>
    </subcellularLocation>
</comment>
<comment type="similarity">
    <text evidence="1">Belongs to the PsaA/PsaB family.</text>
</comment>
<keyword id="KW-0004">4Fe-4S</keyword>
<keyword id="KW-0148">Chlorophyll</keyword>
<keyword id="KW-0150">Chloroplast</keyword>
<keyword id="KW-0157">Chromophore</keyword>
<keyword id="KW-0249">Electron transport</keyword>
<keyword id="KW-0408">Iron</keyword>
<keyword id="KW-0411">Iron-sulfur</keyword>
<keyword id="KW-0460">Magnesium</keyword>
<keyword id="KW-0472">Membrane</keyword>
<keyword id="KW-0479">Metal-binding</keyword>
<keyword id="KW-0560">Oxidoreductase</keyword>
<keyword id="KW-0602">Photosynthesis</keyword>
<keyword id="KW-0603">Photosystem I</keyword>
<keyword id="KW-0934">Plastid</keyword>
<keyword id="KW-0793">Thylakoid</keyword>
<keyword id="KW-0812">Transmembrane</keyword>
<keyword id="KW-1133">Transmembrane helix</keyword>
<keyword id="KW-0813">Transport</keyword>
<sequence>MALRFPRFSQGLAQDPTTRRIWFGIATAHDFESHDDITEERLYQNIFASHFGQLAIIFLWTSGNLFHVAWQGNFESWVQDPLHVRPIAHAIWDPHFGQPAVEAFTRGGALGPVNIAYSGVYQWWYTIGLRTNEDLYTGALFLLFLSAISLIAGWLHLQPKWKPSVSWFKNAESRLNHHLSGLFGVSSLAWTGHLVHVAIPASRGEYVRWNNFLDVLPHPQGLGPLFTGQWNLYAQNPDSSSHLFGTAEGAGTAILTLLGGFHPQTQSLWLTDIAHHHLAIAFIFLVAGHMYRTNFGIGHSMKDLLDAHIPPGGRLGRGHKGLYDTINNSLHFQLGLALASLGVITSLVAQHMYSLPAYAFIAQDFTTQAALYTHHQYIAGFIMTGAFAHGAIFFIRDYNPEQNEDNVLARMLDHKEAIISHLSWASLFLGFHTLGLYVHNDVMLAFGTPEKQILIEPIFAQWIQSAHGKTSYGFDVLLSSTTGPAFNAGRSIWLPGWLNAVNENSNSLFLTIGPGDFLVHHAIALGLHTTTLILVKGALDARGSKLMPDKKDFGYSFPCDGPGRGGTCDISAWDAFYLAVFWMLNTIGWVTFYWHWKHITLWQGNVSQFNESSTYLMGWLRDYLWLNSSQLINGYNPFGMNSLSVWAWMFLFGHLVWATGFMFLISWRGYWQELIETLAWAHERTPLANLIRWRDKPVALSIVQARLVGLAHFSVGYIFTYAAFLIASTSGKFG</sequence>
<evidence type="ECO:0000255" key="1">
    <source>
        <dbReference type="HAMAP-Rule" id="MF_00482"/>
    </source>
</evidence>
<dbReference type="EC" id="1.97.1.12" evidence="1"/>
<dbReference type="EMBL" id="DQ347958">
    <property type="protein sequence ID" value="ABC56212.1"/>
    <property type="molecule type" value="Genomic_DNA"/>
</dbReference>
<dbReference type="RefSeq" id="YP_538847.1">
    <property type="nucleotide sequence ID" value="NC_007943.1"/>
</dbReference>
<dbReference type="SMR" id="Q2MII8"/>
<dbReference type="GeneID" id="3989535"/>
<dbReference type="GO" id="GO:0009535">
    <property type="term" value="C:chloroplast thylakoid membrane"/>
    <property type="evidence" value="ECO:0007669"/>
    <property type="project" value="UniProtKB-SubCell"/>
</dbReference>
<dbReference type="GO" id="GO:0009522">
    <property type="term" value="C:photosystem I"/>
    <property type="evidence" value="ECO:0007669"/>
    <property type="project" value="UniProtKB-KW"/>
</dbReference>
<dbReference type="GO" id="GO:0051539">
    <property type="term" value="F:4 iron, 4 sulfur cluster binding"/>
    <property type="evidence" value="ECO:0007669"/>
    <property type="project" value="UniProtKB-KW"/>
</dbReference>
<dbReference type="GO" id="GO:0016168">
    <property type="term" value="F:chlorophyll binding"/>
    <property type="evidence" value="ECO:0007669"/>
    <property type="project" value="UniProtKB-KW"/>
</dbReference>
<dbReference type="GO" id="GO:0009055">
    <property type="term" value="F:electron transfer activity"/>
    <property type="evidence" value="ECO:0007669"/>
    <property type="project" value="UniProtKB-UniRule"/>
</dbReference>
<dbReference type="GO" id="GO:0000287">
    <property type="term" value="F:magnesium ion binding"/>
    <property type="evidence" value="ECO:0007669"/>
    <property type="project" value="UniProtKB-UniRule"/>
</dbReference>
<dbReference type="GO" id="GO:0016491">
    <property type="term" value="F:oxidoreductase activity"/>
    <property type="evidence" value="ECO:0007669"/>
    <property type="project" value="UniProtKB-KW"/>
</dbReference>
<dbReference type="GO" id="GO:0015979">
    <property type="term" value="P:photosynthesis"/>
    <property type="evidence" value="ECO:0007669"/>
    <property type="project" value="UniProtKB-UniRule"/>
</dbReference>
<dbReference type="FunFam" id="1.20.1130.10:FF:000001">
    <property type="entry name" value="Photosystem I P700 chlorophyll a apoprotein A2"/>
    <property type="match status" value="1"/>
</dbReference>
<dbReference type="Gene3D" id="1.20.1130.10">
    <property type="entry name" value="Photosystem I PsaA/PsaB"/>
    <property type="match status" value="1"/>
</dbReference>
<dbReference type="HAMAP" id="MF_00482">
    <property type="entry name" value="PSI_PsaB"/>
    <property type="match status" value="1"/>
</dbReference>
<dbReference type="InterPro" id="IPR001280">
    <property type="entry name" value="PSI_PsaA/B"/>
</dbReference>
<dbReference type="InterPro" id="IPR020586">
    <property type="entry name" value="PSI_PsaA/B_CS"/>
</dbReference>
<dbReference type="InterPro" id="IPR036408">
    <property type="entry name" value="PSI_PsaA/B_sf"/>
</dbReference>
<dbReference type="InterPro" id="IPR006244">
    <property type="entry name" value="PSI_PsaB"/>
</dbReference>
<dbReference type="NCBIfam" id="TIGR01336">
    <property type="entry name" value="psaB"/>
    <property type="match status" value="1"/>
</dbReference>
<dbReference type="PANTHER" id="PTHR30128">
    <property type="entry name" value="OUTER MEMBRANE PROTEIN, OMPA-RELATED"/>
    <property type="match status" value="1"/>
</dbReference>
<dbReference type="PANTHER" id="PTHR30128:SF19">
    <property type="entry name" value="PHOTOSYSTEM I P700 CHLOROPHYLL A APOPROTEIN A1-RELATED"/>
    <property type="match status" value="1"/>
</dbReference>
<dbReference type="Pfam" id="PF00223">
    <property type="entry name" value="PsaA_PsaB"/>
    <property type="match status" value="1"/>
</dbReference>
<dbReference type="PIRSF" id="PIRSF002905">
    <property type="entry name" value="PSI_A"/>
    <property type="match status" value="1"/>
</dbReference>
<dbReference type="PRINTS" id="PR00257">
    <property type="entry name" value="PHOTSYSPSAAB"/>
</dbReference>
<dbReference type="SUPFAM" id="SSF81558">
    <property type="entry name" value="Photosystem I subunits PsaA/PsaB"/>
    <property type="match status" value="1"/>
</dbReference>
<dbReference type="PROSITE" id="PS00419">
    <property type="entry name" value="PHOTOSYSTEM_I_PSAAB"/>
    <property type="match status" value="1"/>
</dbReference>
<name>PSAB_SOLBU</name>
<geneLocation type="chloroplast"/>
<reference key="1">
    <citation type="journal article" date="2006" name="Theor. Appl. Genet.">
        <title>Complete chloroplast genome sequences of Solanum bulbocastanum, Solanum lycopersicum and comparative analyses with other Solanaceae genomes.</title>
        <authorList>
            <person name="Daniell H."/>
            <person name="Lee S.-B."/>
            <person name="Grevich J."/>
            <person name="Saski C."/>
            <person name="Quesada-Vargas T."/>
            <person name="Guda C."/>
            <person name="Tomkins J."/>
            <person name="Jansen R.K."/>
        </authorList>
    </citation>
    <scope>NUCLEOTIDE SEQUENCE [LARGE SCALE GENOMIC DNA]</scope>
    <source>
        <strain>cv. PT29</strain>
    </source>
</reference>
<protein>
    <recommendedName>
        <fullName evidence="1">Photosystem I P700 chlorophyll a apoprotein A2</fullName>
        <ecNumber evidence="1">1.97.1.12</ecNumber>
    </recommendedName>
    <alternativeName>
        <fullName evidence="1">PSI-B</fullName>
    </alternativeName>
    <alternativeName>
        <fullName evidence="1">PsaB</fullName>
    </alternativeName>
</protein>
<feature type="chain" id="PRO_0000277132" description="Photosystem I P700 chlorophyll a apoprotein A2">
    <location>
        <begin position="1"/>
        <end position="734"/>
    </location>
</feature>
<feature type="transmembrane region" description="Helical; Name=I" evidence="1">
    <location>
        <begin position="46"/>
        <end position="69"/>
    </location>
</feature>
<feature type="transmembrane region" description="Helical; Name=II" evidence="1">
    <location>
        <begin position="135"/>
        <end position="158"/>
    </location>
</feature>
<feature type="transmembrane region" description="Helical; Name=III" evidence="1">
    <location>
        <begin position="175"/>
        <end position="199"/>
    </location>
</feature>
<feature type="transmembrane region" description="Helical; Name=IV" evidence="1">
    <location>
        <begin position="273"/>
        <end position="291"/>
    </location>
</feature>
<feature type="transmembrane region" description="Helical; Name=V" evidence="1">
    <location>
        <begin position="330"/>
        <end position="353"/>
    </location>
</feature>
<feature type="transmembrane region" description="Helical; Name=VI" evidence="1">
    <location>
        <begin position="369"/>
        <end position="395"/>
    </location>
</feature>
<feature type="transmembrane region" description="Helical; Name=VII" evidence="1">
    <location>
        <begin position="417"/>
        <end position="439"/>
    </location>
</feature>
<feature type="transmembrane region" description="Helical; Name=VIII" evidence="1">
    <location>
        <begin position="517"/>
        <end position="535"/>
    </location>
</feature>
<feature type="transmembrane region" description="Helical; Name=IX" evidence="1">
    <location>
        <begin position="575"/>
        <end position="596"/>
    </location>
</feature>
<feature type="transmembrane region" description="Helical; Name=X" evidence="1">
    <location>
        <begin position="643"/>
        <end position="665"/>
    </location>
</feature>
<feature type="transmembrane region" description="Helical; Name=XI" evidence="1">
    <location>
        <begin position="707"/>
        <end position="727"/>
    </location>
</feature>
<feature type="binding site" evidence="1">
    <location>
        <position position="559"/>
    </location>
    <ligand>
        <name>[4Fe-4S] cluster</name>
        <dbReference type="ChEBI" id="CHEBI:49883"/>
        <note>ligand shared between dimeric partners</note>
    </ligand>
</feature>
<feature type="binding site" evidence="1">
    <location>
        <position position="568"/>
    </location>
    <ligand>
        <name>[4Fe-4S] cluster</name>
        <dbReference type="ChEBI" id="CHEBI:49883"/>
        <note>ligand shared between dimeric partners</note>
    </ligand>
</feature>
<feature type="binding site" description="axial binding residue" evidence="1">
    <location>
        <position position="654"/>
    </location>
    <ligand>
        <name>chlorophyll a</name>
        <dbReference type="ChEBI" id="CHEBI:58416"/>
        <label>B1</label>
    </ligand>
    <ligandPart>
        <name>Mg</name>
        <dbReference type="ChEBI" id="CHEBI:25107"/>
    </ligandPart>
</feature>
<feature type="binding site" description="axial binding residue" evidence="1">
    <location>
        <position position="662"/>
    </location>
    <ligand>
        <name>chlorophyll a</name>
        <dbReference type="ChEBI" id="CHEBI:58416"/>
        <label>B3</label>
    </ligand>
    <ligandPart>
        <name>Mg</name>
        <dbReference type="ChEBI" id="CHEBI:25107"/>
    </ligandPart>
</feature>
<feature type="binding site" evidence="1">
    <location>
        <position position="670"/>
    </location>
    <ligand>
        <name>chlorophyll a</name>
        <dbReference type="ChEBI" id="CHEBI:58416"/>
        <label>B3</label>
    </ligand>
</feature>
<feature type="binding site" evidence="1">
    <location>
        <position position="671"/>
    </location>
    <ligand>
        <name>phylloquinone</name>
        <dbReference type="ChEBI" id="CHEBI:18067"/>
        <label>B</label>
    </ligand>
</feature>
<proteinExistence type="inferred from homology"/>
<accession>Q2MII8</accession>